<protein>
    <recommendedName>
        <fullName evidence="1">Methionyl-tRNA formyltransferase</fullName>
        <ecNumber evidence="1">2.1.2.9</ecNumber>
    </recommendedName>
</protein>
<proteinExistence type="inferred from homology"/>
<organism>
    <name type="scientific">Clostridium perfringens (strain 13 / Type A)</name>
    <dbReference type="NCBI Taxonomy" id="195102"/>
    <lineage>
        <taxon>Bacteria</taxon>
        <taxon>Bacillati</taxon>
        <taxon>Bacillota</taxon>
        <taxon>Clostridia</taxon>
        <taxon>Eubacteriales</taxon>
        <taxon>Clostridiaceae</taxon>
        <taxon>Clostridium</taxon>
    </lineage>
</organism>
<keyword id="KW-0648">Protein biosynthesis</keyword>
<keyword id="KW-1185">Reference proteome</keyword>
<keyword id="KW-0808">Transferase</keyword>
<evidence type="ECO:0000255" key="1">
    <source>
        <dbReference type="HAMAP-Rule" id="MF_00182"/>
    </source>
</evidence>
<dbReference type="EC" id="2.1.2.9" evidence="1"/>
<dbReference type="EMBL" id="BA000016">
    <property type="protein sequence ID" value="BAB81449.1"/>
    <property type="molecule type" value="Genomic_DNA"/>
</dbReference>
<dbReference type="RefSeq" id="WP_011010588.1">
    <property type="nucleotide sequence ID" value="NC_003366.1"/>
</dbReference>
<dbReference type="SMR" id="Q8XJL3"/>
<dbReference type="STRING" id="195102.gene:10491007"/>
<dbReference type="KEGG" id="cpe:CPE1743"/>
<dbReference type="HOGENOM" id="CLU_033347_1_1_9"/>
<dbReference type="Proteomes" id="UP000000818">
    <property type="component" value="Chromosome"/>
</dbReference>
<dbReference type="GO" id="GO:0005829">
    <property type="term" value="C:cytosol"/>
    <property type="evidence" value="ECO:0007669"/>
    <property type="project" value="TreeGrafter"/>
</dbReference>
<dbReference type="GO" id="GO:0004479">
    <property type="term" value="F:methionyl-tRNA formyltransferase activity"/>
    <property type="evidence" value="ECO:0007669"/>
    <property type="project" value="UniProtKB-UniRule"/>
</dbReference>
<dbReference type="CDD" id="cd08646">
    <property type="entry name" value="FMT_core_Met-tRNA-FMT_N"/>
    <property type="match status" value="1"/>
</dbReference>
<dbReference type="CDD" id="cd08704">
    <property type="entry name" value="Met_tRNA_FMT_C"/>
    <property type="match status" value="1"/>
</dbReference>
<dbReference type="FunFam" id="3.40.50.170:FF:000004">
    <property type="entry name" value="Methionyl-tRNA formyltransferase"/>
    <property type="match status" value="1"/>
</dbReference>
<dbReference type="Gene3D" id="3.10.25.10">
    <property type="entry name" value="Formyl transferase, C-terminal domain"/>
    <property type="match status" value="1"/>
</dbReference>
<dbReference type="Gene3D" id="3.40.50.170">
    <property type="entry name" value="Formyl transferase, N-terminal domain"/>
    <property type="match status" value="1"/>
</dbReference>
<dbReference type="HAMAP" id="MF_00182">
    <property type="entry name" value="Formyl_trans"/>
    <property type="match status" value="1"/>
</dbReference>
<dbReference type="InterPro" id="IPR005794">
    <property type="entry name" value="Fmt"/>
</dbReference>
<dbReference type="InterPro" id="IPR005793">
    <property type="entry name" value="Formyl_trans_C"/>
</dbReference>
<dbReference type="InterPro" id="IPR037022">
    <property type="entry name" value="Formyl_trans_C_sf"/>
</dbReference>
<dbReference type="InterPro" id="IPR002376">
    <property type="entry name" value="Formyl_transf_N"/>
</dbReference>
<dbReference type="InterPro" id="IPR036477">
    <property type="entry name" value="Formyl_transf_N_sf"/>
</dbReference>
<dbReference type="InterPro" id="IPR011034">
    <property type="entry name" value="Formyl_transferase-like_C_sf"/>
</dbReference>
<dbReference type="InterPro" id="IPR001555">
    <property type="entry name" value="GART_AS"/>
</dbReference>
<dbReference type="InterPro" id="IPR044135">
    <property type="entry name" value="Met-tRNA-FMT_C"/>
</dbReference>
<dbReference type="InterPro" id="IPR041711">
    <property type="entry name" value="Met-tRNA-FMT_N"/>
</dbReference>
<dbReference type="NCBIfam" id="TIGR00460">
    <property type="entry name" value="fmt"/>
    <property type="match status" value="1"/>
</dbReference>
<dbReference type="PANTHER" id="PTHR11138">
    <property type="entry name" value="METHIONYL-TRNA FORMYLTRANSFERASE"/>
    <property type="match status" value="1"/>
</dbReference>
<dbReference type="PANTHER" id="PTHR11138:SF5">
    <property type="entry name" value="METHIONYL-TRNA FORMYLTRANSFERASE, MITOCHONDRIAL"/>
    <property type="match status" value="1"/>
</dbReference>
<dbReference type="Pfam" id="PF02911">
    <property type="entry name" value="Formyl_trans_C"/>
    <property type="match status" value="1"/>
</dbReference>
<dbReference type="Pfam" id="PF00551">
    <property type="entry name" value="Formyl_trans_N"/>
    <property type="match status" value="1"/>
</dbReference>
<dbReference type="SUPFAM" id="SSF50486">
    <property type="entry name" value="FMT C-terminal domain-like"/>
    <property type="match status" value="1"/>
</dbReference>
<dbReference type="SUPFAM" id="SSF53328">
    <property type="entry name" value="Formyltransferase"/>
    <property type="match status" value="1"/>
</dbReference>
<dbReference type="PROSITE" id="PS00373">
    <property type="entry name" value="GART"/>
    <property type="match status" value="1"/>
</dbReference>
<name>FMT_CLOPE</name>
<feature type="chain" id="PRO_0000082950" description="Methionyl-tRNA formyltransferase">
    <location>
        <begin position="1"/>
        <end position="309"/>
    </location>
</feature>
<feature type="binding site" evidence="1">
    <location>
        <begin position="109"/>
        <end position="112"/>
    </location>
    <ligand>
        <name>(6S)-5,6,7,8-tetrahydrofolate</name>
        <dbReference type="ChEBI" id="CHEBI:57453"/>
    </ligand>
</feature>
<reference key="1">
    <citation type="journal article" date="2002" name="Proc. Natl. Acad. Sci. U.S.A.">
        <title>Complete genome sequence of Clostridium perfringens, an anaerobic flesh-eater.</title>
        <authorList>
            <person name="Shimizu T."/>
            <person name="Ohtani K."/>
            <person name="Hirakawa H."/>
            <person name="Ohshima K."/>
            <person name="Yamashita A."/>
            <person name="Shiba T."/>
            <person name="Ogasawara N."/>
            <person name="Hattori M."/>
            <person name="Kuhara S."/>
            <person name="Hayashi H."/>
        </authorList>
    </citation>
    <scope>NUCLEOTIDE SEQUENCE [LARGE SCALE GENOMIC DNA]</scope>
    <source>
        <strain>13 / Type A</strain>
    </source>
</reference>
<gene>
    <name evidence="1" type="primary">fmt</name>
    <name type="ordered locus">CPE1743</name>
</gene>
<accession>Q8XJL3</accession>
<comment type="function">
    <text evidence="1">Attaches a formyl group to the free amino group of methionyl-tRNA(fMet). The formyl group appears to play a dual role in the initiator identity of N-formylmethionyl-tRNA by promoting its recognition by IF2 and preventing the misappropriation of this tRNA by the elongation apparatus.</text>
</comment>
<comment type="catalytic activity">
    <reaction evidence="1">
        <text>L-methionyl-tRNA(fMet) + (6R)-10-formyltetrahydrofolate = N-formyl-L-methionyl-tRNA(fMet) + (6S)-5,6,7,8-tetrahydrofolate + H(+)</text>
        <dbReference type="Rhea" id="RHEA:24380"/>
        <dbReference type="Rhea" id="RHEA-COMP:9952"/>
        <dbReference type="Rhea" id="RHEA-COMP:9953"/>
        <dbReference type="ChEBI" id="CHEBI:15378"/>
        <dbReference type="ChEBI" id="CHEBI:57453"/>
        <dbReference type="ChEBI" id="CHEBI:78530"/>
        <dbReference type="ChEBI" id="CHEBI:78844"/>
        <dbReference type="ChEBI" id="CHEBI:195366"/>
        <dbReference type="EC" id="2.1.2.9"/>
    </reaction>
</comment>
<comment type="similarity">
    <text evidence="1">Belongs to the Fmt family.</text>
</comment>
<sequence>MKIVFMGTPDFAVPSLKSLINEFGVEAVFTQPDRPKGRGKKLGMSPVKEVALEHNIPVYQPLRLKNEPETIEELKNMEPDFIIVVAFGQILPKEVLDIPKYGCINLHASLLPKFRGAAPLNWSIIKGEKVTGNTTMLMDVGLDTGDMLLKDEVEITDNMTAGELHDILMERGGELLVRTIKGILNNEITPEKQNEEETCYAPMLNKEIAKIDWSLSAQDIHNLVRGLNPWPVALTSYDDITMKVHQTRVEKGDSNKEPGTIISVDKTGIKVSTGKDILVIEKLQFPNSKQLFVEQFINGNSVEIGKVLK</sequence>